<gene>
    <name evidence="1" type="primary">rppH</name>
    <name evidence="1" type="synonym">nudH</name>
    <name type="ordered locus">EcE24377A_3150</name>
</gene>
<comment type="function">
    <text evidence="1">Accelerates the degradation of transcripts by removing pyrophosphate from the 5'-end of triphosphorylated RNA, leading to a more labile monophosphorylated state that can stimulate subsequent ribonuclease cleavage.</text>
</comment>
<comment type="cofactor">
    <cofactor evidence="1">
        <name>a divalent metal cation</name>
        <dbReference type="ChEBI" id="CHEBI:60240"/>
    </cofactor>
</comment>
<comment type="similarity">
    <text evidence="1">Belongs to the Nudix hydrolase family. RppH subfamily.</text>
</comment>
<accession>A7ZQT6</accession>
<proteinExistence type="inferred from homology"/>
<feature type="chain" id="PRO_1000059299" description="RNA pyrophosphohydrolase">
    <location>
        <begin position="1"/>
        <end position="176"/>
    </location>
</feature>
<feature type="domain" description="Nudix hydrolase" evidence="1">
    <location>
        <begin position="6"/>
        <end position="149"/>
    </location>
</feature>
<feature type="short sequence motif" description="Nudix box">
    <location>
        <begin position="38"/>
        <end position="59"/>
    </location>
</feature>
<sequence length="176" mass="20795">MIDDDGYRPNVGIVICNRQGQVMWARRFGQHSWQFPQGGINPGESAEQAMYRELFEEVGLSRKDVRILASTRNWLRYKLPKRLVRWDTKPVCIGQKQKWFLLQLVSGDAEINMQTSSTPEFDGWRWVSYWYPVRQVVSFKRDVYRRVMKEFASVVMSLQENTPKPQNASAYRRKRG</sequence>
<organism>
    <name type="scientific">Escherichia coli O139:H28 (strain E24377A / ETEC)</name>
    <dbReference type="NCBI Taxonomy" id="331111"/>
    <lineage>
        <taxon>Bacteria</taxon>
        <taxon>Pseudomonadati</taxon>
        <taxon>Pseudomonadota</taxon>
        <taxon>Gammaproteobacteria</taxon>
        <taxon>Enterobacterales</taxon>
        <taxon>Enterobacteriaceae</taxon>
        <taxon>Escherichia</taxon>
    </lineage>
</organism>
<protein>
    <recommendedName>
        <fullName evidence="1">RNA pyrophosphohydrolase</fullName>
        <ecNumber evidence="1">3.6.1.-</ecNumber>
    </recommendedName>
    <alternativeName>
        <fullName evidence="1">(Di)nucleoside polyphosphate hydrolase</fullName>
    </alternativeName>
</protein>
<reference key="1">
    <citation type="journal article" date="2008" name="J. Bacteriol.">
        <title>The pangenome structure of Escherichia coli: comparative genomic analysis of E. coli commensal and pathogenic isolates.</title>
        <authorList>
            <person name="Rasko D.A."/>
            <person name="Rosovitz M.J."/>
            <person name="Myers G.S.A."/>
            <person name="Mongodin E.F."/>
            <person name="Fricke W.F."/>
            <person name="Gajer P."/>
            <person name="Crabtree J."/>
            <person name="Sebaihia M."/>
            <person name="Thomson N.R."/>
            <person name="Chaudhuri R."/>
            <person name="Henderson I.R."/>
            <person name="Sperandio V."/>
            <person name="Ravel J."/>
        </authorList>
    </citation>
    <scope>NUCLEOTIDE SEQUENCE [LARGE SCALE GENOMIC DNA]</scope>
    <source>
        <strain>E24377A / ETEC</strain>
    </source>
</reference>
<keyword id="KW-0378">Hydrolase</keyword>
<keyword id="KW-1185">Reference proteome</keyword>
<dbReference type="EC" id="3.6.1.-" evidence="1"/>
<dbReference type="EMBL" id="CP000800">
    <property type="protein sequence ID" value="ABV16845.1"/>
    <property type="molecule type" value="Genomic_DNA"/>
</dbReference>
<dbReference type="RefSeq" id="WP_000564489.1">
    <property type="nucleotide sequence ID" value="NC_009801.1"/>
</dbReference>
<dbReference type="BMRB" id="A7ZQT6"/>
<dbReference type="SMR" id="A7ZQT6"/>
<dbReference type="GeneID" id="75203778"/>
<dbReference type="KEGG" id="ecw:EcE24377A_3150"/>
<dbReference type="HOGENOM" id="CLU_087195_3_2_6"/>
<dbReference type="Proteomes" id="UP000001122">
    <property type="component" value="Chromosome"/>
</dbReference>
<dbReference type="GO" id="GO:0005737">
    <property type="term" value="C:cytoplasm"/>
    <property type="evidence" value="ECO:0007669"/>
    <property type="project" value="TreeGrafter"/>
</dbReference>
<dbReference type="GO" id="GO:0034353">
    <property type="term" value="F:mRNA 5'-diphosphatase activity"/>
    <property type="evidence" value="ECO:0007669"/>
    <property type="project" value="TreeGrafter"/>
</dbReference>
<dbReference type="GO" id="GO:0006402">
    <property type="term" value="P:mRNA catabolic process"/>
    <property type="evidence" value="ECO:0007669"/>
    <property type="project" value="TreeGrafter"/>
</dbReference>
<dbReference type="CDD" id="cd03671">
    <property type="entry name" value="NUDIX_Ap4A_hydrolase_plant_like"/>
    <property type="match status" value="1"/>
</dbReference>
<dbReference type="FunFam" id="3.90.79.10:FF:000001">
    <property type="entry name" value="RNA pyrophosphohydrolase"/>
    <property type="match status" value="1"/>
</dbReference>
<dbReference type="Gene3D" id="3.90.79.10">
    <property type="entry name" value="Nucleoside Triphosphate Pyrophosphohydrolase"/>
    <property type="match status" value="1"/>
</dbReference>
<dbReference type="HAMAP" id="MF_00298">
    <property type="entry name" value="Nudix_RppH"/>
    <property type="match status" value="1"/>
</dbReference>
<dbReference type="InterPro" id="IPR020476">
    <property type="entry name" value="Nudix_hydrolase"/>
</dbReference>
<dbReference type="InterPro" id="IPR015797">
    <property type="entry name" value="NUDIX_hydrolase-like_dom_sf"/>
</dbReference>
<dbReference type="InterPro" id="IPR020084">
    <property type="entry name" value="NUDIX_hydrolase_CS"/>
</dbReference>
<dbReference type="InterPro" id="IPR000086">
    <property type="entry name" value="NUDIX_hydrolase_dom"/>
</dbReference>
<dbReference type="InterPro" id="IPR022927">
    <property type="entry name" value="RppH"/>
</dbReference>
<dbReference type="NCBIfam" id="NF001934">
    <property type="entry name" value="PRK00714.1-1"/>
    <property type="match status" value="1"/>
</dbReference>
<dbReference type="NCBIfam" id="NF001937">
    <property type="entry name" value="PRK00714.1-4"/>
    <property type="match status" value="1"/>
</dbReference>
<dbReference type="NCBIfam" id="NF001938">
    <property type="entry name" value="PRK00714.1-5"/>
    <property type="match status" value="1"/>
</dbReference>
<dbReference type="PANTHER" id="PTHR23114">
    <property type="entry name" value="M7GPPPN-MRNA HYDROLASE"/>
    <property type="match status" value="1"/>
</dbReference>
<dbReference type="PANTHER" id="PTHR23114:SF17">
    <property type="entry name" value="M7GPPPN-MRNA HYDROLASE"/>
    <property type="match status" value="1"/>
</dbReference>
<dbReference type="Pfam" id="PF00293">
    <property type="entry name" value="NUDIX"/>
    <property type="match status" value="1"/>
</dbReference>
<dbReference type="PRINTS" id="PR00502">
    <property type="entry name" value="NUDIXFAMILY"/>
</dbReference>
<dbReference type="SUPFAM" id="SSF55811">
    <property type="entry name" value="Nudix"/>
    <property type="match status" value="1"/>
</dbReference>
<dbReference type="PROSITE" id="PS51462">
    <property type="entry name" value="NUDIX"/>
    <property type="match status" value="1"/>
</dbReference>
<dbReference type="PROSITE" id="PS00893">
    <property type="entry name" value="NUDIX_BOX"/>
    <property type="match status" value="1"/>
</dbReference>
<name>RPPH_ECO24</name>
<evidence type="ECO:0000255" key="1">
    <source>
        <dbReference type="HAMAP-Rule" id="MF_00298"/>
    </source>
</evidence>